<gene>
    <name evidence="6" type="primary">FDH1</name>
    <name evidence="7" type="ordered locus">YOR388C</name>
</gene>
<proteinExistence type="evidence at protein level"/>
<dbReference type="EC" id="1.17.1.9" evidence="1 3"/>
<dbReference type="EMBL" id="Z75296">
    <property type="protein sequence ID" value="CAA99720.1"/>
    <property type="molecule type" value="Genomic_DNA"/>
</dbReference>
<dbReference type="EMBL" id="BK006948">
    <property type="protein sequence ID" value="DAA11147.1"/>
    <property type="molecule type" value="Genomic_DNA"/>
</dbReference>
<dbReference type="PIR" id="S67300">
    <property type="entry name" value="S67300"/>
</dbReference>
<dbReference type="RefSeq" id="NP_015033.1">
    <property type="nucleotide sequence ID" value="NM_001183808.1"/>
</dbReference>
<dbReference type="SMR" id="Q08911"/>
<dbReference type="BioGRID" id="34769">
    <property type="interactions" value="83"/>
</dbReference>
<dbReference type="DIP" id="DIP-5327N"/>
<dbReference type="FunCoup" id="Q08911">
    <property type="interactions" value="620"/>
</dbReference>
<dbReference type="IntAct" id="Q08911">
    <property type="interactions" value="4"/>
</dbReference>
<dbReference type="MINT" id="Q08911"/>
<dbReference type="STRING" id="4932.YOR388C"/>
<dbReference type="PaxDb" id="4932-YOR388C"/>
<dbReference type="PeptideAtlas" id="Q08911"/>
<dbReference type="EnsemblFungi" id="YOR388C_mRNA">
    <property type="protein sequence ID" value="YOR388C"/>
    <property type="gene ID" value="YOR388C"/>
</dbReference>
<dbReference type="GeneID" id="854570"/>
<dbReference type="KEGG" id="sce:YOR388C"/>
<dbReference type="AGR" id="SGD:S000005915"/>
<dbReference type="SGD" id="S000005915">
    <property type="gene designation" value="FDH1"/>
</dbReference>
<dbReference type="VEuPathDB" id="FungiDB:YOR388C"/>
<dbReference type="eggNOG" id="KOG0069">
    <property type="taxonomic scope" value="Eukaryota"/>
</dbReference>
<dbReference type="HOGENOM" id="CLU_019796_0_0_1"/>
<dbReference type="InParanoid" id="Q08911"/>
<dbReference type="OMA" id="HYTDRHR"/>
<dbReference type="OrthoDB" id="4043264at2759"/>
<dbReference type="BioCyc" id="YEAST:YOR388C-MONOMER"/>
<dbReference type="BRENDA" id="1.17.1.9">
    <property type="organism ID" value="984"/>
</dbReference>
<dbReference type="BioGRID-ORCS" id="854570">
    <property type="hits" value="0 hits in 10 CRISPR screens"/>
</dbReference>
<dbReference type="PRO" id="PR:Q08911"/>
<dbReference type="Proteomes" id="UP000002311">
    <property type="component" value="Chromosome XV"/>
</dbReference>
<dbReference type="RNAct" id="Q08911">
    <property type="molecule type" value="protein"/>
</dbReference>
<dbReference type="GO" id="GO:0005829">
    <property type="term" value="C:cytosol"/>
    <property type="evidence" value="ECO:0000314"/>
    <property type="project" value="SGD"/>
</dbReference>
<dbReference type="GO" id="GO:0008863">
    <property type="term" value="F:formate dehydrogenase (NAD+) activity"/>
    <property type="evidence" value="ECO:0000314"/>
    <property type="project" value="SGD"/>
</dbReference>
<dbReference type="GO" id="GO:0051287">
    <property type="term" value="F:NAD binding"/>
    <property type="evidence" value="ECO:0007669"/>
    <property type="project" value="InterPro"/>
</dbReference>
<dbReference type="GO" id="GO:0016616">
    <property type="term" value="F:oxidoreductase activity, acting on the CH-OH group of donors, NAD or NADP as acceptor"/>
    <property type="evidence" value="ECO:0007669"/>
    <property type="project" value="InterPro"/>
</dbReference>
<dbReference type="GO" id="GO:0042183">
    <property type="term" value="P:formate catabolic process"/>
    <property type="evidence" value="ECO:0000316"/>
    <property type="project" value="SGD"/>
</dbReference>
<dbReference type="CDD" id="cd05302">
    <property type="entry name" value="FDH"/>
    <property type="match status" value="1"/>
</dbReference>
<dbReference type="FunFam" id="3.40.50.720:FF:000057">
    <property type="entry name" value="Formate dehydrogenase"/>
    <property type="match status" value="1"/>
</dbReference>
<dbReference type="FunFam" id="3.40.50.720:FF:000862">
    <property type="entry name" value="Formate dehydrogenase chloroplastic/mitochondrial"/>
    <property type="match status" value="1"/>
</dbReference>
<dbReference type="Gene3D" id="3.40.50.720">
    <property type="entry name" value="NAD(P)-binding Rossmann-like Domain"/>
    <property type="match status" value="2"/>
</dbReference>
<dbReference type="HAMAP" id="MF_03210">
    <property type="entry name" value="Formate_dehydrogenase"/>
    <property type="match status" value="1"/>
</dbReference>
<dbReference type="InterPro" id="IPR006139">
    <property type="entry name" value="D-isomer_2_OHA_DH_cat_dom"/>
</dbReference>
<dbReference type="InterPro" id="IPR029753">
    <property type="entry name" value="D-isomer_DH_CS"/>
</dbReference>
<dbReference type="InterPro" id="IPR006140">
    <property type="entry name" value="D-isomer_DH_NAD-bd"/>
</dbReference>
<dbReference type="InterPro" id="IPR033689">
    <property type="entry name" value="FDH_NAD-dep"/>
</dbReference>
<dbReference type="InterPro" id="IPR036291">
    <property type="entry name" value="NAD(P)-bd_dom_sf"/>
</dbReference>
<dbReference type="NCBIfam" id="NF005750">
    <property type="entry name" value="PRK07574.1"/>
    <property type="match status" value="1"/>
</dbReference>
<dbReference type="PANTHER" id="PTHR42938">
    <property type="entry name" value="FORMATE DEHYDROGENASE 1"/>
    <property type="match status" value="1"/>
</dbReference>
<dbReference type="PANTHER" id="PTHR42938:SF9">
    <property type="entry name" value="FORMATE DEHYDROGENASE 1"/>
    <property type="match status" value="1"/>
</dbReference>
<dbReference type="Pfam" id="PF00389">
    <property type="entry name" value="2-Hacid_dh"/>
    <property type="match status" value="1"/>
</dbReference>
<dbReference type="Pfam" id="PF02826">
    <property type="entry name" value="2-Hacid_dh_C"/>
    <property type="match status" value="1"/>
</dbReference>
<dbReference type="SUPFAM" id="SSF52283">
    <property type="entry name" value="Formate/glycerate dehydrogenase catalytic domain-like"/>
    <property type="match status" value="1"/>
</dbReference>
<dbReference type="SUPFAM" id="SSF51735">
    <property type="entry name" value="NAD(P)-binding Rossmann-fold domains"/>
    <property type="match status" value="1"/>
</dbReference>
<dbReference type="PROSITE" id="PS00670">
    <property type="entry name" value="D_2_HYDROXYACID_DH_2"/>
    <property type="match status" value="1"/>
</dbReference>
<dbReference type="PROSITE" id="PS00671">
    <property type="entry name" value="D_2_HYDROXYACID_DH_3"/>
    <property type="match status" value="1"/>
</dbReference>
<keyword id="KW-0963">Cytoplasm</keyword>
<keyword id="KW-0520">NAD</keyword>
<keyword id="KW-0560">Oxidoreductase</keyword>
<keyword id="KW-1185">Reference proteome</keyword>
<evidence type="ECO:0000255" key="1">
    <source>
        <dbReference type="HAMAP-Rule" id="MF_03210"/>
    </source>
</evidence>
<evidence type="ECO:0000269" key="2">
    <source>
    </source>
</evidence>
<evidence type="ECO:0000269" key="3">
    <source>
    </source>
</evidence>
<evidence type="ECO:0000269" key="4">
    <source>
    </source>
</evidence>
<evidence type="ECO:0000303" key="5">
    <source>
    </source>
</evidence>
<evidence type="ECO:0000303" key="6">
    <source>
    </source>
</evidence>
<evidence type="ECO:0000312" key="7">
    <source>
        <dbReference type="SGD" id="S000005915"/>
    </source>
</evidence>
<organism>
    <name type="scientific">Saccharomyces cerevisiae (strain ATCC 204508 / S288c)</name>
    <name type="common">Baker's yeast</name>
    <dbReference type="NCBI Taxonomy" id="559292"/>
    <lineage>
        <taxon>Eukaryota</taxon>
        <taxon>Fungi</taxon>
        <taxon>Dikarya</taxon>
        <taxon>Ascomycota</taxon>
        <taxon>Saccharomycotina</taxon>
        <taxon>Saccharomycetes</taxon>
        <taxon>Saccharomycetales</taxon>
        <taxon>Saccharomycetaceae</taxon>
        <taxon>Saccharomyces</taxon>
    </lineage>
</organism>
<feature type="chain" id="PRO_0000223647" description="Formate dehydrogenase 1">
    <location>
        <begin position="1"/>
        <end position="376"/>
    </location>
</feature>
<feature type="binding site" evidence="1">
    <location>
        <position position="97"/>
    </location>
    <ligand>
        <name>substrate</name>
    </ligand>
</feature>
<feature type="binding site" evidence="1">
    <location>
        <position position="121"/>
    </location>
    <ligand>
        <name>substrate</name>
    </ligand>
</feature>
<feature type="binding site" evidence="1">
    <location>
        <begin position="176"/>
        <end position="177"/>
    </location>
    <ligand>
        <name>NAD(+)</name>
        <dbReference type="ChEBI" id="CHEBI:57540"/>
    </ligand>
</feature>
<feature type="binding site" evidence="1">
    <location>
        <position position="197"/>
    </location>
    <ligand>
        <name>NAD(+)</name>
        <dbReference type="ChEBI" id="CHEBI:57540"/>
    </ligand>
</feature>
<feature type="binding site" evidence="1">
    <location>
        <begin position="244"/>
        <end position="248"/>
    </location>
    <ligand>
        <name>NAD(+)</name>
        <dbReference type="ChEBI" id="CHEBI:57540"/>
    </ligand>
</feature>
<feature type="binding site" evidence="1">
    <location>
        <position position="270"/>
    </location>
    <ligand>
        <name>NAD(+)</name>
        <dbReference type="ChEBI" id="CHEBI:57540"/>
    </ligand>
</feature>
<feature type="binding site" evidence="1">
    <location>
        <position position="296"/>
    </location>
    <ligand>
        <name>NAD(+)</name>
        <dbReference type="ChEBI" id="CHEBI:57540"/>
    </ligand>
</feature>
<feature type="binding site" evidence="1">
    <location>
        <begin position="325"/>
        <end position="328"/>
    </location>
    <ligand>
        <name>NAD(+)</name>
        <dbReference type="ChEBI" id="CHEBI:57540"/>
    </ligand>
</feature>
<feature type="site" description="Important for catalytic activity" evidence="1">
    <location>
        <position position="272"/>
    </location>
</feature>
<feature type="site" description="Important for catalytic activity" evidence="1">
    <location>
        <position position="325"/>
    </location>
</feature>
<feature type="mutagenesis site" description="Shifts the coenzyme preference of the enzyme from NAD(+) to NADP(+)." evidence="3">
    <original>DY</original>
    <variation>AR</variation>
    <location>
        <begin position="197"/>
        <end position="198"/>
    </location>
</feature>
<reference key="1">
    <citation type="journal article" date="1997" name="Nature">
        <title>The nucleotide sequence of Saccharomyces cerevisiae chromosome XV.</title>
        <authorList>
            <person name="Dujon B."/>
            <person name="Albermann K."/>
            <person name="Aldea M."/>
            <person name="Alexandraki D."/>
            <person name="Ansorge W."/>
            <person name="Arino J."/>
            <person name="Benes V."/>
            <person name="Bohn C."/>
            <person name="Bolotin-Fukuhara M."/>
            <person name="Bordonne R."/>
            <person name="Boyer J."/>
            <person name="Camasses A."/>
            <person name="Casamayor A."/>
            <person name="Casas C."/>
            <person name="Cheret G."/>
            <person name="Cziepluch C."/>
            <person name="Daignan-Fornier B."/>
            <person name="Dang V.-D."/>
            <person name="de Haan M."/>
            <person name="Delius H."/>
            <person name="Durand P."/>
            <person name="Fairhead C."/>
            <person name="Feldmann H."/>
            <person name="Gaillon L."/>
            <person name="Galisson F."/>
            <person name="Gamo F.-J."/>
            <person name="Gancedo C."/>
            <person name="Goffeau A."/>
            <person name="Goulding S.E."/>
            <person name="Grivell L.A."/>
            <person name="Habbig B."/>
            <person name="Hand N.J."/>
            <person name="Hani J."/>
            <person name="Hattenhorst U."/>
            <person name="Hebling U."/>
            <person name="Hernando Y."/>
            <person name="Herrero E."/>
            <person name="Heumann K."/>
            <person name="Hiesel R."/>
            <person name="Hilger F."/>
            <person name="Hofmann B."/>
            <person name="Hollenberg C.P."/>
            <person name="Hughes B."/>
            <person name="Jauniaux J.-C."/>
            <person name="Kalogeropoulos A."/>
            <person name="Katsoulou C."/>
            <person name="Kordes E."/>
            <person name="Lafuente M.J."/>
            <person name="Landt O."/>
            <person name="Louis E.J."/>
            <person name="Maarse A.C."/>
            <person name="Madania A."/>
            <person name="Mannhaupt G."/>
            <person name="Marck C."/>
            <person name="Martin R.P."/>
            <person name="Mewes H.-W."/>
            <person name="Michaux G."/>
            <person name="Paces V."/>
            <person name="Parle-McDermott A.G."/>
            <person name="Pearson B.M."/>
            <person name="Perrin A."/>
            <person name="Pettersson B."/>
            <person name="Poch O."/>
            <person name="Pohl T.M."/>
            <person name="Poirey R."/>
            <person name="Portetelle D."/>
            <person name="Pujol A."/>
            <person name="Purnelle B."/>
            <person name="Ramezani Rad M."/>
            <person name="Rechmann S."/>
            <person name="Schwager C."/>
            <person name="Schweizer M."/>
            <person name="Sor F."/>
            <person name="Sterky F."/>
            <person name="Tarassov I.A."/>
            <person name="Teodoru C."/>
            <person name="Tettelin H."/>
            <person name="Thierry A."/>
            <person name="Tobiasch E."/>
            <person name="Tzermia M."/>
            <person name="Uhlen M."/>
            <person name="Unseld M."/>
            <person name="Valens M."/>
            <person name="Vandenbol M."/>
            <person name="Vetter I."/>
            <person name="Vlcek C."/>
            <person name="Voet M."/>
            <person name="Volckaert G."/>
            <person name="Voss H."/>
            <person name="Wambutt R."/>
            <person name="Wedler H."/>
            <person name="Wiemann S."/>
            <person name="Winsor B."/>
            <person name="Wolfe K.H."/>
            <person name="Zollner A."/>
            <person name="Zumstein E."/>
            <person name="Kleine K."/>
        </authorList>
    </citation>
    <scope>NUCLEOTIDE SEQUENCE [LARGE SCALE GENOMIC DNA]</scope>
    <source>
        <strain>ATCC 204508 / S288c</strain>
    </source>
</reference>
<reference key="2">
    <citation type="journal article" date="2014" name="G3 (Bethesda)">
        <title>The reference genome sequence of Saccharomyces cerevisiae: Then and now.</title>
        <authorList>
            <person name="Engel S.R."/>
            <person name="Dietrich F.S."/>
            <person name="Fisk D.G."/>
            <person name="Binkley G."/>
            <person name="Balakrishnan R."/>
            <person name="Costanzo M.C."/>
            <person name="Dwight S.S."/>
            <person name="Hitz B.C."/>
            <person name="Karra K."/>
            <person name="Nash R.S."/>
            <person name="Weng S."/>
            <person name="Wong E.D."/>
            <person name="Lloyd P."/>
            <person name="Skrzypek M.S."/>
            <person name="Miyasato S.R."/>
            <person name="Simison M."/>
            <person name="Cherry J.M."/>
        </authorList>
    </citation>
    <scope>GENOME REANNOTATION</scope>
    <source>
        <strain>ATCC 204508 / S288c</strain>
    </source>
</reference>
<reference key="3">
    <citation type="journal article" date="1997" name="Yeast">
        <title>Expression cassettes for formaldehyde and fluoroacetate resistance, two dominant markers in Saccharomyces cerevisiae.</title>
        <authorList>
            <person name="van den Berg M.A."/>
            <person name="Steensma H.Y."/>
        </authorList>
    </citation>
    <scope>FUNCTION</scope>
</reference>
<reference key="4">
    <citation type="journal article" date="2002" name="Biochem. J.">
        <title>Engineering of coenzyme specificity of formate dehydrogenase from Saccharomyces cerevisiae.</title>
        <authorList>
            <person name="Serov A.E."/>
            <person name="Popova A.S."/>
            <person name="Fedorchuk V.V."/>
            <person name="Tishkov V.I."/>
        </authorList>
    </citation>
    <scope>FUNCTION</scope>
    <scope>CATALYTIC ACTIVITY</scope>
    <scope>BIOPHYSICOCHEMICAL PROPERTIES</scope>
    <scope>MUTAGENESIS OF 197-ASP-TYR-198</scope>
</reference>
<reference key="5">
    <citation type="journal article" date="2002" name="Yeast">
        <title>Functional analysis of structural genes for NAD(+)-dependent formate dehydrogenase in Saccharomyces cerevisiae.</title>
        <authorList>
            <person name="Overkamp K.M."/>
            <person name="Koetter P."/>
            <person name="van der Hoek R."/>
            <person name="Schoondermark-Stolk S."/>
            <person name="Luttik M.A.H."/>
            <person name="van Dijken J.P."/>
            <person name="Pronk J.T."/>
        </authorList>
    </citation>
    <scope>FUNCTION</scope>
    <scope>SUBCELLULAR LOCATION</scope>
    <scope>INDUCTION</scope>
</reference>
<sequence>MSKGKVLLVLYEGGKHAEEQEKLLGCIENELGIRNFIEEQGYELVTTIDKDPEPTSTVDRELKDAEIVITTPFFPAYISRNRIAEAPNLKLCVTAGVGSDHVDLEAANERKITVTEVTGSNVVSVAEHVMATILVLIRNYNGGHQQAINGEWDIAGVAKNEYDLEDKIISTVGAGRIGYRVLERLVAFNPKKLLYYDYQELPAEAINRLNEASKLFNGRGDIVQRVEKLEDMVAQSDVVTINCPLHKDSRGLFNKKLISHMKDGAYLVNTARGAICVAEDVAEAVKSGKLAGYGGDVWDKQPAPKDHPWRTMDNKDHVGNAMTVHISGTSLDAQKRYAQGVKNILNSYFSKKFDYRPQDIIVQNGSYATRAYGQKK</sequence>
<name>FDH1_YEAST</name>
<comment type="function">
    <text evidence="1 2 3 4">Catalyzes the NAD(+)-dependent oxidation of formate to carbon dioxide. Formate oxidation is the final step in the methanol oxidation pathway in methylotrophic microorganisms (PubMed:11921099, PubMed:12144528, PubMed:9178506). Has a role in the detoxification of exogenous formate in non-methylotrophic organisms (PubMed:11921099).</text>
</comment>
<comment type="catalytic activity">
    <reaction evidence="1 3">
        <text>formate + NAD(+) = CO2 + NADH</text>
        <dbReference type="Rhea" id="RHEA:15985"/>
        <dbReference type="ChEBI" id="CHEBI:15740"/>
        <dbReference type="ChEBI" id="CHEBI:16526"/>
        <dbReference type="ChEBI" id="CHEBI:57540"/>
        <dbReference type="ChEBI" id="CHEBI:57945"/>
        <dbReference type="EC" id="1.17.1.9"/>
    </reaction>
</comment>
<comment type="biophysicochemical properties">
    <kinetics>
        <KM evidence="3">5.5 mM for formate</KM>
        <KM evidence="3">36 uM for NAD(+)</KM>
        <text evidence="4">kcat is 6.5 sec(-1) with NAD(+) as substrate.</text>
    </kinetics>
</comment>
<comment type="subunit">
    <text evidence="1">Homodimer.</text>
</comment>
<comment type="subcellular location">
    <subcellularLocation>
        <location evidence="1 2">Cytoplasm</location>
    </subcellularLocation>
</comment>
<comment type="induction">
    <text evidence="2">Induced by formate.</text>
</comment>
<comment type="similarity">
    <text evidence="1">Belongs to the D-isomer specific 2-hydroxyacid dehydrogenase family. FDH subfamily.</text>
</comment>
<protein>
    <recommendedName>
        <fullName evidence="1 6">Formate dehydrogenase 1</fullName>
        <shortName evidence="1">FDH</shortName>
        <ecNumber evidence="1 3">1.17.1.9</ecNumber>
    </recommendedName>
    <alternativeName>
        <fullName evidence="1 5">NAD-dependent formate dehydrogenase</fullName>
    </alternativeName>
</protein>
<accession>Q08911</accession>
<accession>D6W381</accession>